<feature type="chain" id="PRO_0000264939" description="UvrABC system protein C">
    <location>
        <begin position="1"/>
        <end position="695"/>
    </location>
</feature>
<feature type="domain" description="GIY-YIG" evidence="1">
    <location>
        <begin position="88"/>
        <end position="166"/>
    </location>
</feature>
<feature type="domain" description="UVR" evidence="1">
    <location>
        <begin position="276"/>
        <end position="311"/>
    </location>
</feature>
<feature type="region of interest" description="Disordered" evidence="2">
    <location>
        <begin position="1"/>
        <end position="44"/>
    </location>
</feature>
<feature type="compositionally biased region" description="Basic and acidic residues" evidence="2">
    <location>
        <begin position="1"/>
        <end position="10"/>
    </location>
</feature>
<name>UVRC_RHOP2</name>
<gene>
    <name evidence="1" type="primary">uvrC</name>
    <name type="ordered locus">RPB_1177</name>
</gene>
<comment type="function">
    <text evidence="1">The UvrABC repair system catalyzes the recognition and processing of DNA lesions. UvrC both incises the 5' and 3' sides of the lesion. The N-terminal half is responsible for the 3' incision and the C-terminal half is responsible for the 5' incision.</text>
</comment>
<comment type="subunit">
    <text evidence="1">Interacts with UvrB in an incision complex.</text>
</comment>
<comment type="subcellular location">
    <subcellularLocation>
        <location evidence="1">Cytoplasm</location>
    </subcellularLocation>
</comment>
<comment type="similarity">
    <text evidence="1">Belongs to the UvrC family.</text>
</comment>
<reference key="1">
    <citation type="submission" date="2006-01" db="EMBL/GenBank/DDBJ databases">
        <title>Complete sequence of Rhodopseudomonas palustris HaA2.</title>
        <authorList>
            <consortium name="US DOE Joint Genome Institute"/>
            <person name="Copeland A."/>
            <person name="Lucas S."/>
            <person name="Lapidus A."/>
            <person name="Barry K."/>
            <person name="Detter J.C."/>
            <person name="Glavina T."/>
            <person name="Hammon N."/>
            <person name="Israni S."/>
            <person name="Pitluck S."/>
            <person name="Chain P."/>
            <person name="Malfatti S."/>
            <person name="Shin M."/>
            <person name="Vergez L."/>
            <person name="Schmutz J."/>
            <person name="Larimer F."/>
            <person name="Land M."/>
            <person name="Hauser L."/>
            <person name="Pelletier D.A."/>
            <person name="Kyrpides N."/>
            <person name="Anderson I."/>
            <person name="Oda Y."/>
            <person name="Harwood C.S."/>
            <person name="Richardson P."/>
        </authorList>
    </citation>
    <scope>NUCLEOTIDE SEQUENCE [LARGE SCALE GENOMIC DNA]</scope>
    <source>
        <strain>HaA2</strain>
    </source>
</reference>
<evidence type="ECO:0000255" key="1">
    <source>
        <dbReference type="HAMAP-Rule" id="MF_00203"/>
    </source>
</evidence>
<evidence type="ECO:0000256" key="2">
    <source>
        <dbReference type="SAM" id="MobiDB-lite"/>
    </source>
</evidence>
<sequence length="695" mass="76774">MNHDPAETRDTAAAPLADTESPSPVSPELTPHPAPAAQDIDTATAELTVDEDDEARLPEIEDDSAEVADGPLAVGRAAIEQAVRLAPTSPGVYRMLNAAHDVLYVGKAKNVKKRLSSYARPTGHVMRIARMIAATVTVEIISTSTETEALLLEANLIKQLRPRFNVLLRDDKSFPYILITGDHWAPQILKHRGAQSRPGRYFGPFASVGAVNRTITALQRAFLVRSCTDSFFESRTRPCLLYQIRRCSGPCTGEVDFPGYTELVREAKDFLSGRSRAVKQELAVEMEKASNELEFETAALYRDRLAALSAIQSQQGINPRTVEEADVFAIYQEGGYSCVEVFFFRTGQNWGNRAYFPRAEKSFTPEEVLASFLAQFYDDKPPPKLILLSHDIEDCALLADALCIKADRKVEISTPKRGEKKELVAHALTNAREALGRKLADTATQTRLLQGLATTLGLPKPPQRIEVYDNSHIQGTNAVGAMIVAGPDGFIKNQYRKFNIRSEGLTPGDDYAMMREVLERRFKRLAAAKAEGEAAKPNDDETPQWPDLVIIDGGRGQLNAARGVLTELGLDAEVTLLGVAKGPDRDAGRETLFMPEREAIKLEPRDPVLYFIQRLRDEAHRFVIGSHRKLRKKDIREAGLQEIPGIGPSRKRALLHHFGTLKEIERASLGDLGKVPGISAESARRIFDFFHPGPG</sequence>
<accession>Q2J0X3</accession>
<keyword id="KW-0963">Cytoplasm</keyword>
<keyword id="KW-0227">DNA damage</keyword>
<keyword id="KW-0228">DNA excision</keyword>
<keyword id="KW-0234">DNA repair</keyword>
<keyword id="KW-0267">Excision nuclease</keyword>
<keyword id="KW-1185">Reference proteome</keyword>
<keyword id="KW-0742">SOS response</keyword>
<proteinExistence type="inferred from homology"/>
<protein>
    <recommendedName>
        <fullName evidence="1">UvrABC system protein C</fullName>
        <shortName evidence="1">Protein UvrC</shortName>
    </recommendedName>
    <alternativeName>
        <fullName evidence="1">Excinuclease ABC subunit C</fullName>
    </alternativeName>
</protein>
<organism>
    <name type="scientific">Rhodopseudomonas palustris (strain HaA2)</name>
    <dbReference type="NCBI Taxonomy" id="316058"/>
    <lineage>
        <taxon>Bacteria</taxon>
        <taxon>Pseudomonadati</taxon>
        <taxon>Pseudomonadota</taxon>
        <taxon>Alphaproteobacteria</taxon>
        <taxon>Hyphomicrobiales</taxon>
        <taxon>Nitrobacteraceae</taxon>
        <taxon>Rhodopseudomonas</taxon>
    </lineage>
</organism>
<dbReference type="EMBL" id="CP000250">
    <property type="protein sequence ID" value="ABD05887.1"/>
    <property type="molecule type" value="Genomic_DNA"/>
</dbReference>
<dbReference type="RefSeq" id="WP_011440076.1">
    <property type="nucleotide sequence ID" value="NC_007778.1"/>
</dbReference>
<dbReference type="SMR" id="Q2J0X3"/>
<dbReference type="STRING" id="316058.RPB_1177"/>
<dbReference type="KEGG" id="rpb:RPB_1177"/>
<dbReference type="eggNOG" id="COG0322">
    <property type="taxonomic scope" value="Bacteria"/>
</dbReference>
<dbReference type="HOGENOM" id="CLU_014841_3_0_5"/>
<dbReference type="OrthoDB" id="9804933at2"/>
<dbReference type="Proteomes" id="UP000008809">
    <property type="component" value="Chromosome"/>
</dbReference>
<dbReference type="GO" id="GO:0005737">
    <property type="term" value="C:cytoplasm"/>
    <property type="evidence" value="ECO:0007669"/>
    <property type="project" value="UniProtKB-SubCell"/>
</dbReference>
<dbReference type="GO" id="GO:0009380">
    <property type="term" value="C:excinuclease repair complex"/>
    <property type="evidence" value="ECO:0007669"/>
    <property type="project" value="InterPro"/>
</dbReference>
<dbReference type="GO" id="GO:0003677">
    <property type="term" value="F:DNA binding"/>
    <property type="evidence" value="ECO:0007669"/>
    <property type="project" value="UniProtKB-UniRule"/>
</dbReference>
<dbReference type="GO" id="GO:0009381">
    <property type="term" value="F:excinuclease ABC activity"/>
    <property type="evidence" value="ECO:0007669"/>
    <property type="project" value="UniProtKB-UniRule"/>
</dbReference>
<dbReference type="GO" id="GO:0006289">
    <property type="term" value="P:nucleotide-excision repair"/>
    <property type="evidence" value="ECO:0007669"/>
    <property type="project" value="UniProtKB-UniRule"/>
</dbReference>
<dbReference type="GO" id="GO:0009432">
    <property type="term" value="P:SOS response"/>
    <property type="evidence" value="ECO:0007669"/>
    <property type="project" value="UniProtKB-UniRule"/>
</dbReference>
<dbReference type="CDD" id="cd10434">
    <property type="entry name" value="GIY-YIG_UvrC_Cho"/>
    <property type="match status" value="1"/>
</dbReference>
<dbReference type="FunFam" id="3.30.420.340:FF:000001">
    <property type="entry name" value="UvrABC system protein C"/>
    <property type="match status" value="1"/>
</dbReference>
<dbReference type="FunFam" id="3.40.1440.10:FF:000001">
    <property type="entry name" value="UvrABC system protein C"/>
    <property type="match status" value="1"/>
</dbReference>
<dbReference type="Gene3D" id="1.10.150.20">
    <property type="entry name" value="5' to 3' exonuclease, C-terminal subdomain"/>
    <property type="match status" value="1"/>
</dbReference>
<dbReference type="Gene3D" id="3.40.1440.10">
    <property type="entry name" value="GIY-YIG endonuclease"/>
    <property type="match status" value="1"/>
</dbReference>
<dbReference type="Gene3D" id="4.10.860.10">
    <property type="entry name" value="UVR domain"/>
    <property type="match status" value="1"/>
</dbReference>
<dbReference type="Gene3D" id="3.30.420.340">
    <property type="entry name" value="UvrC, RNAse H endonuclease domain"/>
    <property type="match status" value="1"/>
</dbReference>
<dbReference type="HAMAP" id="MF_00203">
    <property type="entry name" value="UvrC"/>
    <property type="match status" value="1"/>
</dbReference>
<dbReference type="InterPro" id="IPR000305">
    <property type="entry name" value="GIY-YIG_endonuc"/>
</dbReference>
<dbReference type="InterPro" id="IPR035901">
    <property type="entry name" value="GIY-YIG_endonuc_sf"/>
</dbReference>
<dbReference type="InterPro" id="IPR047296">
    <property type="entry name" value="GIY-YIG_UvrC_Cho"/>
</dbReference>
<dbReference type="InterPro" id="IPR003583">
    <property type="entry name" value="Hlx-hairpin-Hlx_DNA-bd_motif"/>
</dbReference>
<dbReference type="InterPro" id="IPR010994">
    <property type="entry name" value="RuvA_2-like"/>
</dbReference>
<dbReference type="InterPro" id="IPR001943">
    <property type="entry name" value="UVR_dom"/>
</dbReference>
<dbReference type="InterPro" id="IPR036876">
    <property type="entry name" value="UVR_dom_sf"/>
</dbReference>
<dbReference type="InterPro" id="IPR050066">
    <property type="entry name" value="UvrABC_protein_C"/>
</dbReference>
<dbReference type="InterPro" id="IPR004791">
    <property type="entry name" value="UvrC"/>
</dbReference>
<dbReference type="InterPro" id="IPR001162">
    <property type="entry name" value="UvrC_RNase_H_dom"/>
</dbReference>
<dbReference type="InterPro" id="IPR038476">
    <property type="entry name" value="UvrC_RNase_H_dom_sf"/>
</dbReference>
<dbReference type="NCBIfam" id="NF001824">
    <property type="entry name" value="PRK00558.1-5"/>
    <property type="match status" value="1"/>
</dbReference>
<dbReference type="NCBIfam" id="TIGR00194">
    <property type="entry name" value="uvrC"/>
    <property type="match status" value="1"/>
</dbReference>
<dbReference type="PANTHER" id="PTHR30562:SF1">
    <property type="entry name" value="UVRABC SYSTEM PROTEIN C"/>
    <property type="match status" value="1"/>
</dbReference>
<dbReference type="PANTHER" id="PTHR30562">
    <property type="entry name" value="UVRC/OXIDOREDUCTASE"/>
    <property type="match status" value="1"/>
</dbReference>
<dbReference type="Pfam" id="PF01541">
    <property type="entry name" value="GIY-YIG"/>
    <property type="match status" value="1"/>
</dbReference>
<dbReference type="Pfam" id="PF14520">
    <property type="entry name" value="HHH_5"/>
    <property type="match status" value="1"/>
</dbReference>
<dbReference type="Pfam" id="PF02151">
    <property type="entry name" value="UVR"/>
    <property type="match status" value="1"/>
</dbReference>
<dbReference type="Pfam" id="PF22920">
    <property type="entry name" value="UvrC_RNaseH"/>
    <property type="match status" value="1"/>
</dbReference>
<dbReference type="Pfam" id="PF08459">
    <property type="entry name" value="UvrC_RNaseH_dom"/>
    <property type="match status" value="1"/>
</dbReference>
<dbReference type="SMART" id="SM00465">
    <property type="entry name" value="GIYc"/>
    <property type="match status" value="1"/>
</dbReference>
<dbReference type="SMART" id="SM00278">
    <property type="entry name" value="HhH1"/>
    <property type="match status" value="2"/>
</dbReference>
<dbReference type="SUPFAM" id="SSF46600">
    <property type="entry name" value="C-terminal UvrC-binding domain of UvrB"/>
    <property type="match status" value="1"/>
</dbReference>
<dbReference type="SUPFAM" id="SSF82771">
    <property type="entry name" value="GIY-YIG endonuclease"/>
    <property type="match status" value="1"/>
</dbReference>
<dbReference type="SUPFAM" id="SSF47781">
    <property type="entry name" value="RuvA domain 2-like"/>
    <property type="match status" value="1"/>
</dbReference>
<dbReference type="PROSITE" id="PS50164">
    <property type="entry name" value="GIY_YIG"/>
    <property type="match status" value="1"/>
</dbReference>
<dbReference type="PROSITE" id="PS50151">
    <property type="entry name" value="UVR"/>
    <property type="match status" value="1"/>
</dbReference>
<dbReference type="PROSITE" id="PS50165">
    <property type="entry name" value="UVRC"/>
    <property type="match status" value="1"/>
</dbReference>